<evidence type="ECO:0000255" key="1">
    <source>
        <dbReference type="HAMAP-Rule" id="MF_01961"/>
    </source>
</evidence>
<evidence type="ECO:0000256" key="2">
    <source>
        <dbReference type="SAM" id="MobiDB-lite"/>
    </source>
</evidence>
<keyword id="KW-0349">Heme</keyword>
<keyword id="KW-0376">Hydrogen peroxide</keyword>
<keyword id="KW-0408">Iron</keyword>
<keyword id="KW-0479">Metal-binding</keyword>
<keyword id="KW-0560">Oxidoreductase</keyword>
<keyword id="KW-0575">Peroxidase</keyword>
<keyword id="KW-1185">Reference proteome</keyword>
<organism>
    <name type="scientific">Salinispora tropica (strain ATCC BAA-916 / DSM 44818 / JCM 13857 / NBRC 105044 / CNB-440)</name>
    <dbReference type="NCBI Taxonomy" id="369723"/>
    <lineage>
        <taxon>Bacteria</taxon>
        <taxon>Bacillati</taxon>
        <taxon>Actinomycetota</taxon>
        <taxon>Actinomycetes</taxon>
        <taxon>Micromonosporales</taxon>
        <taxon>Micromonosporaceae</taxon>
        <taxon>Salinispora</taxon>
    </lineage>
</organism>
<proteinExistence type="inferred from homology"/>
<name>KATG_SALTO</name>
<comment type="function">
    <text evidence="1">Bifunctional enzyme with both catalase and broad-spectrum peroxidase activity.</text>
</comment>
<comment type="catalytic activity">
    <reaction evidence="1">
        <text>H2O2 + AH2 = A + 2 H2O</text>
        <dbReference type="Rhea" id="RHEA:30275"/>
        <dbReference type="ChEBI" id="CHEBI:13193"/>
        <dbReference type="ChEBI" id="CHEBI:15377"/>
        <dbReference type="ChEBI" id="CHEBI:16240"/>
        <dbReference type="ChEBI" id="CHEBI:17499"/>
        <dbReference type="EC" id="1.11.1.21"/>
    </reaction>
</comment>
<comment type="catalytic activity">
    <reaction evidence="1">
        <text>2 H2O2 = O2 + 2 H2O</text>
        <dbReference type="Rhea" id="RHEA:20309"/>
        <dbReference type="ChEBI" id="CHEBI:15377"/>
        <dbReference type="ChEBI" id="CHEBI:15379"/>
        <dbReference type="ChEBI" id="CHEBI:16240"/>
        <dbReference type="EC" id="1.11.1.21"/>
    </reaction>
</comment>
<comment type="cofactor">
    <cofactor evidence="1">
        <name>heme b</name>
        <dbReference type="ChEBI" id="CHEBI:60344"/>
    </cofactor>
    <text evidence="1">Binds 1 heme b (iron(II)-protoporphyrin IX) group per dimer.</text>
</comment>
<comment type="subunit">
    <text evidence="1">Homodimer or homotetramer.</text>
</comment>
<comment type="PTM">
    <text evidence="1">Formation of the three residue Trp-Tyr-Met cross-link is important for the catalase, but not the peroxidase activity of the enzyme.</text>
</comment>
<comment type="similarity">
    <text evidence="1">Belongs to the peroxidase family. Peroxidase/catalase subfamily.</text>
</comment>
<reference key="1">
    <citation type="journal article" date="2007" name="Proc. Natl. Acad. Sci. U.S.A.">
        <title>Genome sequencing reveals complex secondary metabolome in the marine actinomycete Salinispora tropica.</title>
        <authorList>
            <person name="Udwary D.W."/>
            <person name="Zeigler L."/>
            <person name="Asolkar R.N."/>
            <person name="Singan V."/>
            <person name="Lapidus A."/>
            <person name="Fenical W."/>
            <person name="Jensen P.R."/>
            <person name="Moore B.S."/>
        </authorList>
    </citation>
    <scope>NUCLEOTIDE SEQUENCE [LARGE SCALE GENOMIC DNA]</scope>
    <source>
        <strain>ATCC BAA-916 / DSM 44818 / JCM 13857 / NBRC 105044 / CNB-440</strain>
    </source>
</reference>
<protein>
    <recommendedName>
        <fullName evidence="1">Catalase-peroxidase</fullName>
        <shortName evidence="1">CP</shortName>
        <ecNumber evidence="1">1.11.1.21</ecNumber>
    </recommendedName>
    <alternativeName>
        <fullName evidence="1">Peroxidase/catalase</fullName>
    </alternativeName>
</protein>
<feature type="chain" id="PRO_0000354903" description="Catalase-peroxidase">
    <location>
        <begin position="1"/>
        <end position="758"/>
    </location>
</feature>
<feature type="region of interest" description="Disordered" evidence="2">
    <location>
        <begin position="1"/>
        <end position="57"/>
    </location>
</feature>
<feature type="compositionally biased region" description="Polar residues" evidence="2">
    <location>
        <begin position="1"/>
        <end position="10"/>
    </location>
</feature>
<feature type="active site" description="Proton acceptor" evidence="1">
    <location>
        <position position="129"/>
    </location>
</feature>
<feature type="binding site" description="axial binding residue" evidence="1">
    <location>
        <position position="291"/>
    </location>
    <ligand>
        <name>heme b</name>
        <dbReference type="ChEBI" id="CHEBI:60344"/>
    </ligand>
    <ligandPart>
        <name>Fe</name>
        <dbReference type="ChEBI" id="CHEBI:18248"/>
    </ligandPart>
</feature>
<feature type="site" description="Transition state stabilizer" evidence="1">
    <location>
        <position position="125"/>
    </location>
</feature>
<feature type="cross-link" description="Tryptophyl-tyrosyl-methioninium (Trp-Tyr) (with M-276)" evidence="1">
    <location>
        <begin position="128"/>
        <end position="250"/>
    </location>
</feature>
<feature type="cross-link" description="Tryptophyl-tyrosyl-methioninium (Tyr-Met) (with W-128)" evidence="1">
    <location>
        <begin position="250"/>
        <end position="276"/>
    </location>
</feature>
<accession>A4X6K7</accession>
<gene>
    <name evidence="1" type="primary">katG</name>
    <name type="ordered locus">Strop_2054</name>
</gene>
<sequence>MSDTQDNAPVSAQGVDQKAAAGCPVAHDSVTAHGSESESPAIDSPSAVGGGRPRTNRDWWPNQLDLSVLSTNSAKVNPLGEDFSYAKEFAKLDVEALKRDITEVLTTSQDWWPADFGHYGGLMIRLSWHAAGTYRIHDGRGGAGDGGQRFAPLNSWPDNVNLDKARRLLWPVKQKYGQKISWADLLVLAGNVALESMGFKTFGFGFGREDVWEPEEIFWGPEDTWLGDERYVSEKEFSAGVGATEMGLIYVNPEGPRGNADPASAAHFIRETFRRMAMNDEETVALIAGGHTFGKTHGAGVADDHVGPEPEGAPLEAQGLGWMSSHASGVGADTISSGLEVTWTDRPTQWSNRFFEILFGYEWELTTSPGGAKQWVAKDAEAIIPDAYDSTKKHKPTMLTTDLSLRVDPAYERISRRFLENPDEFALAFAKAWYKLLHRDMGPVSRFLGPWVPQTQLWQDPVPAVDHELVGAADIAALKAKVLESGLTTTQLVSTAWASAASFRHTDKRGGANGARIRLEPQRSWEVNQPEQLATVLPALEEIQREFNAAGGAKISLADLIVLAGSAAVEKAARDAGVEVTVPFRPGRTDATQEQTDVDSFRVLEPRADAFRNYLRPGEKTQPEVLLVDRAYLLNLTAPEMTVLIGGLRALEANAGGSRHGVLTDRPGVLTNDFFTNLLASGARWKASESTEHAYEIRDVATDKVKWTASAVDLIFGSNSQLRALAEVYASEDAREKFVQDFVAAWTKVMELDRFDLA</sequence>
<dbReference type="EC" id="1.11.1.21" evidence="1"/>
<dbReference type="EMBL" id="CP000667">
    <property type="protein sequence ID" value="ABP54507.1"/>
    <property type="molecule type" value="Genomic_DNA"/>
</dbReference>
<dbReference type="RefSeq" id="WP_011905937.1">
    <property type="nucleotide sequence ID" value="NC_009380.1"/>
</dbReference>
<dbReference type="SMR" id="A4X6K7"/>
<dbReference type="STRING" id="369723.Strop_2054"/>
<dbReference type="KEGG" id="stp:Strop_2054"/>
<dbReference type="PATRIC" id="fig|369723.5.peg.2107"/>
<dbReference type="eggNOG" id="COG0376">
    <property type="taxonomic scope" value="Bacteria"/>
</dbReference>
<dbReference type="HOGENOM" id="CLU_025424_2_0_11"/>
<dbReference type="Proteomes" id="UP000000235">
    <property type="component" value="Chromosome"/>
</dbReference>
<dbReference type="GO" id="GO:0005829">
    <property type="term" value="C:cytosol"/>
    <property type="evidence" value="ECO:0007669"/>
    <property type="project" value="TreeGrafter"/>
</dbReference>
<dbReference type="GO" id="GO:0004096">
    <property type="term" value="F:catalase activity"/>
    <property type="evidence" value="ECO:0007669"/>
    <property type="project" value="UniProtKB-UniRule"/>
</dbReference>
<dbReference type="GO" id="GO:0020037">
    <property type="term" value="F:heme binding"/>
    <property type="evidence" value="ECO:0007669"/>
    <property type="project" value="InterPro"/>
</dbReference>
<dbReference type="GO" id="GO:0046872">
    <property type="term" value="F:metal ion binding"/>
    <property type="evidence" value="ECO:0007669"/>
    <property type="project" value="UniProtKB-KW"/>
</dbReference>
<dbReference type="GO" id="GO:0070301">
    <property type="term" value="P:cellular response to hydrogen peroxide"/>
    <property type="evidence" value="ECO:0007669"/>
    <property type="project" value="TreeGrafter"/>
</dbReference>
<dbReference type="GO" id="GO:0042744">
    <property type="term" value="P:hydrogen peroxide catabolic process"/>
    <property type="evidence" value="ECO:0007669"/>
    <property type="project" value="UniProtKB-KW"/>
</dbReference>
<dbReference type="CDD" id="cd00649">
    <property type="entry name" value="catalase_peroxidase_1"/>
    <property type="match status" value="1"/>
</dbReference>
<dbReference type="CDD" id="cd08200">
    <property type="entry name" value="catalase_peroxidase_2"/>
    <property type="match status" value="1"/>
</dbReference>
<dbReference type="FunFam" id="1.10.420.10:FF:000002">
    <property type="entry name" value="Catalase-peroxidase"/>
    <property type="match status" value="1"/>
</dbReference>
<dbReference type="FunFam" id="1.10.420.10:FF:000004">
    <property type="entry name" value="Catalase-peroxidase"/>
    <property type="match status" value="1"/>
</dbReference>
<dbReference type="FunFam" id="1.10.520.10:FF:000002">
    <property type="entry name" value="Catalase-peroxidase"/>
    <property type="match status" value="1"/>
</dbReference>
<dbReference type="Gene3D" id="1.10.520.10">
    <property type="match status" value="2"/>
</dbReference>
<dbReference type="Gene3D" id="1.10.420.10">
    <property type="entry name" value="Peroxidase, domain 2"/>
    <property type="match status" value="2"/>
</dbReference>
<dbReference type="HAMAP" id="MF_01961">
    <property type="entry name" value="Catal_peroxid"/>
    <property type="match status" value="1"/>
</dbReference>
<dbReference type="InterPro" id="IPR000763">
    <property type="entry name" value="Catalase_peroxidase"/>
</dbReference>
<dbReference type="InterPro" id="IPR002016">
    <property type="entry name" value="Haem_peroxidase"/>
</dbReference>
<dbReference type="InterPro" id="IPR010255">
    <property type="entry name" value="Haem_peroxidase_sf"/>
</dbReference>
<dbReference type="InterPro" id="IPR019794">
    <property type="entry name" value="Peroxidases_AS"/>
</dbReference>
<dbReference type="InterPro" id="IPR019793">
    <property type="entry name" value="Peroxidases_heam-ligand_BS"/>
</dbReference>
<dbReference type="NCBIfam" id="TIGR00198">
    <property type="entry name" value="cat_per_HPI"/>
    <property type="match status" value="1"/>
</dbReference>
<dbReference type="NCBIfam" id="NF011635">
    <property type="entry name" value="PRK15061.1"/>
    <property type="match status" value="1"/>
</dbReference>
<dbReference type="PANTHER" id="PTHR30555:SF0">
    <property type="entry name" value="CATALASE-PEROXIDASE"/>
    <property type="match status" value="1"/>
</dbReference>
<dbReference type="PANTHER" id="PTHR30555">
    <property type="entry name" value="HYDROPEROXIDASE I, BIFUNCTIONAL CATALASE-PEROXIDASE"/>
    <property type="match status" value="1"/>
</dbReference>
<dbReference type="Pfam" id="PF00141">
    <property type="entry name" value="peroxidase"/>
    <property type="match status" value="2"/>
</dbReference>
<dbReference type="PRINTS" id="PR00460">
    <property type="entry name" value="BPEROXIDASE"/>
</dbReference>
<dbReference type="PRINTS" id="PR00458">
    <property type="entry name" value="PEROXIDASE"/>
</dbReference>
<dbReference type="SUPFAM" id="SSF48113">
    <property type="entry name" value="Heme-dependent peroxidases"/>
    <property type="match status" value="2"/>
</dbReference>
<dbReference type="PROSITE" id="PS00435">
    <property type="entry name" value="PEROXIDASE_1"/>
    <property type="match status" value="1"/>
</dbReference>
<dbReference type="PROSITE" id="PS00436">
    <property type="entry name" value="PEROXIDASE_2"/>
    <property type="match status" value="1"/>
</dbReference>
<dbReference type="PROSITE" id="PS50873">
    <property type="entry name" value="PEROXIDASE_4"/>
    <property type="match status" value="1"/>
</dbReference>